<name>Y3661_AERHH</name>
<keyword id="KW-1185">Reference proteome</keyword>
<protein>
    <recommendedName>
        <fullName evidence="1">UPF0235 protein AHA_3661</fullName>
    </recommendedName>
</protein>
<comment type="similarity">
    <text evidence="1">Belongs to the UPF0235 family.</text>
</comment>
<proteinExistence type="inferred from homology"/>
<accession>A0KPB6</accession>
<organism>
    <name type="scientific">Aeromonas hydrophila subsp. hydrophila (strain ATCC 7966 / DSM 30187 / BCRC 13018 / CCUG 14551 / JCM 1027 / KCTC 2358 / NCIMB 9240 / NCTC 8049)</name>
    <dbReference type="NCBI Taxonomy" id="380703"/>
    <lineage>
        <taxon>Bacteria</taxon>
        <taxon>Pseudomonadati</taxon>
        <taxon>Pseudomonadota</taxon>
        <taxon>Gammaproteobacteria</taxon>
        <taxon>Aeromonadales</taxon>
        <taxon>Aeromonadaceae</taxon>
        <taxon>Aeromonas</taxon>
    </lineage>
</organism>
<sequence length="99" mass="10782">MAAVLREGDELIMHLMIQPKASRDQIVGLHGEELKVAITAPPVDGQANSHLIKYLAKQFKVAKGQVRIVRGELGRHKTVAIEAPRQIPAEVSALLDNQG</sequence>
<evidence type="ECO:0000255" key="1">
    <source>
        <dbReference type="HAMAP-Rule" id="MF_00634"/>
    </source>
</evidence>
<dbReference type="EMBL" id="CP000462">
    <property type="protein sequence ID" value="ABK39438.1"/>
    <property type="molecule type" value="Genomic_DNA"/>
</dbReference>
<dbReference type="RefSeq" id="YP_858117.1">
    <property type="nucleotide sequence ID" value="NC_008570.1"/>
</dbReference>
<dbReference type="SMR" id="A0KPB6"/>
<dbReference type="STRING" id="380703.AHA_3661"/>
<dbReference type="EnsemblBacteria" id="ABK39438">
    <property type="protein sequence ID" value="ABK39438"/>
    <property type="gene ID" value="AHA_3661"/>
</dbReference>
<dbReference type="GeneID" id="4490493"/>
<dbReference type="KEGG" id="aha:AHA_3661"/>
<dbReference type="PATRIC" id="fig|380703.7.peg.3637"/>
<dbReference type="eggNOG" id="COG1872">
    <property type="taxonomic scope" value="Bacteria"/>
</dbReference>
<dbReference type="HOGENOM" id="CLU_130694_5_0_6"/>
<dbReference type="OrthoDB" id="9800587at2"/>
<dbReference type="Proteomes" id="UP000000756">
    <property type="component" value="Chromosome"/>
</dbReference>
<dbReference type="GO" id="GO:0005737">
    <property type="term" value="C:cytoplasm"/>
    <property type="evidence" value="ECO:0007669"/>
    <property type="project" value="TreeGrafter"/>
</dbReference>
<dbReference type="Gene3D" id="3.30.1200.10">
    <property type="entry name" value="YggU-like"/>
    <property type="match status" value="1"/>
</dbReference>
<dbReference type="HAMAP" id="MF_00634">
    <property type="entry name" value="UPF0235"/>
    <property type="match status" value="1"/>
</dbReference>
<dbReference type="InterPro" id="IPR003746">
    <property type="entry name" value="DUF167"/>
</dbReference>
<dbReference type="InterPro" id="IPR036591">
    <property type="entry name" value="YggU-like_sf"/>
</dbReference>
<dbReference type="NCBIfam" id="TIGR00251">
    <property type="entry name" value="DUF167 family protein"/>
    <property type="match status" value="1"/>
</dbReference>
<dbReference type="NCBIfam" id="NF003466">
    <property type="entry name" value="PRK05090.1"/>
    <property type="match status" value="1"/>
</dbReference>
<dbReference type="PANTHER" id="PTHR13420">
    <property type="entry name" value="UPF0235 PROTEIN C15ORF40"/>
    <property type="match status" value="1"/>
</dbReference>
<dbReference type="PANTHER" id="PTHR13420:SF7">
    <property type="entry name" value="UPF0235 PROTEIN C15ORF40"/>
    <property type="match status" value="1"/>
</dbReference>
<dbReference type="Pfam" id="PF02594">
    <property type="entry name" value="DUF167"/>
    <property type="match status" value="1"/>
</dbReference>
<dbReference type="SMART" id="SM01152">
    <property type="entry name" value="DUF167"/>
    <property type="match status" value="1"/>
</dbReference>
<dbReference type="SUPFAM" id="SSF69786">
    <property type="entry name" value="YggU-like"/>
    <property type="match status" value="1"/>
</dbReference>
<reference key="1">
    <citation type="journal article" date="2006" name="J. Bacteriol.">
        <title>Genome sequence of Aeromonas hydrophila ATCC 7966T: jack of all trades.</title>
        <authorList>
            <person name="Seshadri R."/>
            <person name="Joseph S.W."/>
            <person name="Chopra A.K."/>
            <person name="Sha J."/>
            <person name="Shaw J."/>
            <person name="Graf J."/>
            <person name="Haft D.H."/>
            <person name="Wu M."/>
            <person name="Ren Q."/>
            <person name="Rosovitz M.J."/>
            <person name="Madupu R."/>
            <person name="Tallon L."/>
            <person name="Kim M."/>
            <person name="Jin S."/>
            <person name="Vuong H."/>
            <person name="Stine O.C."/>
            <person name="Ali A."/>
            <person name="Horneman A.J."/>
            <person name="Heidelberg J.F."/>
        </authorList>
    </citation>
    <scope>NUCLEOTIDE SEQUENCE [LARGE SCALE GENOMIC DNA]</scope>
    <source>
        <strain>ATCC 7966 / DSM 30187 / BCRC 13018 / CCUG 14551 / JCM 1027 / KCTC 2358 / NCIMB 9240 / NCTC 8049</strain>
    </source>
</reference>
<gene>
    <name type="ordered locus">AHA_3661</name>
</gene>
<feature type="chain" id="PRO_1000056756" description="UPF0235 protein AHA_3661">
    <location>
        <begin position="1"/>
        <end position="99"/>
    </location>
</feature>